<keyword id="KW-0002">3D-structure</keyword>
<keyword id="KW-0963">Cytoplasm</keyword>
<keyword id="KW-0238">DNA-binding</keyword>
<keyword id="KW-0287">Flowering</keyword>
<keyword id="KW-0539">Nucleus</keyword>
<keyword id="KW-1185">Reference proteome</keyword>
<keyword id="KW-0804">Transcription</keyword>
<keyword id="KW-0805">Transcription regulation</keyword>
<name>NFYC2_ORYSJ</name>
<comment type="function">
    <text evidence="1 3">Probable transcription factor involved in the regulation of flowering time under long day (LD) conditions. Functions as a repressor of flowering, independently of HD1 and GHD7. Controls flowering time by negatively regulating the expression of EHD1 and HD3A (PubMed:26542958). Component of the NF-Y/HAP transcription factor complex (By similarity).</text>
</comment>
<comment type="subunit">
    <text evidence="1 3">Heterotrimeric transcription factor composed of three components, NF-YA, NF-YB and NF-YC. NF-YB and NF-YC must interact and dimerize for NF-YA association and DNA binding (By similarity). Interacts with NFYB8, NFYB10 and HD5/NFYB11 (PubMed:26542958).</text>
</comment>
<comment type="subcellular location">
    <subcellularLocation>
        <location evidence="3">Nucleus</location>
    </subcellularLocation>
    <subcellularLocation>
        <location evidence="3">Cytoplasm</location>
    </subcellularLocation>
</comment>
<comment type="induction">
    <text evidence="3">Circadian-regulation under long day (LD) conditions. Expression increases at the end of the dark period, peaks in the beginning of the light period and gradually decreases during daytime.</text>
</comment>
<comment type="similarity">
    <text evidence="6">Belongs to the NFYC/HAP5 subunit family.</text>
</comment>
<comment type="sequence caution" evidence="6">
    <conflict type="erroneous gene model prediction">
        <sequence resource="EMBL-CDS" id="ABF94991"/>
    </conflict>
</comment>
<protein>
    <recommendedName>
        <fullName evidence="6">Nuclear transcription factor Y subunit C-2</fullName>
        <shortName evidence="5">OsNF-YC2</shortName>
    </recommendedName>
    <alternativeName>
        <fullName evidence="6">Transcriptional activator HAP5C</fullName>
        <shortName evidence="4">OsHAP5C</shortName>
    </alternativeName>
</protein>
<sequence length="246" mass="25896">MDNQQLPYAGQPAAAGAGAPVPGVPGAGGPPAVPHHHLLQQQQAQLQAFWAYQRQEAERASASDFKNHQLPLARIKKIMKADEDVRMISAEAPVLFAKACELFILELTIRSWLHAEENKRRTLQRNDVAAAIARTDVFDFLVDIVPREEAKEEPGSALGFAAGGPAGAVGAAGPAAGLPYYYPPMGQPAPMMPAWHVPAWDPAWQQGAAPDVDQGAAGSFSEEGQQGFAGHGGAAASFPPAPPSSE</sequence>
<proteinExistence type="evidence at protein level"/>
<organism>
    <name type="scientific">Oryza sativa subsp. japonica</name>
    <name type="common">Rice</name>
    <dbReference type="NCBI Taxonomy" id="39947"/>
    <lineage>
        <taxon>Eukaryota</taxon>
        <taxon>Viridiplantae</taxon>
        <taxon>Streptophyta</taxon>
        <taxon>Embryophyta</taxon>
        <taxon>Tracheophyta</taxon>
        <taxon>Spermatophyta</taxon>
        <taxon>Magnoliopsida</taxon>
        <taxon>Liliopsida</taxon>
        <taxon>Poales</taxon>
        <taxon>Poaceae</taxon>
        <taxon>BOP clade</taxon>
        <taxon>Oryzoideae</taxon>
        <taxon>Oryzeae</taxon>
        <taxon>Oryzinae</taxon>
        <taxon>Oryza</taxon>
        <taxon>Oryza sativa</taxon>
    </lineage>
</organism>
<evidence type="ECO:0000250" key="1"/>
<evidence type="ECO:0000256" key="2">
    <source>
        <dbReference type="SAM" id="MobiDB-lite"/>
    </source>
</evidence>
<evidence type="ECO:0000269" key="3">
    <source>
    </source>
</evidence>
<evidence type="ECO:0000303" key="4">
    <source>
    </source>
</evidence>
<evidence type="ECO:0000303" key="5">
    <source>
    </source>
</evidence>
<evidence type="ECO:0000305" key="6"/>
<evidence type="ECO:0000312" key="7">
    <source>
        <dbReference type="EMBL" id="ABF94991.1"/>
    </source>
</evidence>
<evidence type="ECO:0000312" key="8">
    <source>
        <dbReference type="EMBL" id="BAH92080.1"/>
    </source>
</evidence>
<evidence type="ECO:0007829" key="9">
    <source>
        <dbReference type="PDB" id="7C9P"/>
    </source>
</evidence>
<gene>
    <name evidence="6" type="primary">NFYC2</name>
    <name evidence="4" type="synonym">HAP5C</name>
    <name evidence="8" type="ordered locus">Os03g0251350</name>
    <name evidence="7" type="ordered locus">LOC_Os03g14669</name>
</gene>
<dbReference type="EMBL" id="AB288043">
    <property type="protein sequence ID" value="BAF64451.1"/>
    <property type="molecule type" value="Genomic_DNA"/>
</dbReference>
<dbReference type="EMBL" id="DP000009">
    <property type="protein sequence ID" value="ABF94991.1"/>
    <property type="status" value="ALT_SEQ"/>
    <property type="molecule type" value="Genomic_DNA"/>
</dbReference>
<dbReference type="EMBL" id="AP008209">
    <property type="protein sequence ID" value="BAH92080.1"/>
    <property type="molecule type" value="Genomic_DNA"/>
</dbReference>
<dbReference type="EMBL" id="AP014959">
    <property type="protein sequence ID" value="BAS83288.1"/>
    <property type="molecule type" value="Genomic_DNA"/>
</dbReference>
<dbReference type="RefSeq" id="XP_015628319.1">
    <property type="nucleotide sequence ID" value="XM_015772833.1"/>
</dbReference>
<dbReference type="RefSeq" id="XP_015628320.1">
    <property type="nucleotide sequence ID" value="XM_015772834.1"/>
</dbReference>
<dbReference type="PDB" id="7C9O">
    <property type="method" value="X-ray"/>
    <property type="resolution" value="2.55 A"/>
    <property type="chains" value="C=55-156"/>
</dbReference>
<dbReference type="PDB" id="7C9P">
    <property type="method" value="X-ray"/>
    <property type="resolution" value="2.00 A"/>
    <property type="chains" value="B/D=55-156"/>
</dbReference>
<dbReference type="PDBsum" id="7C9O"/>
<dbReference type="PDBsum" id="7C9P"/>
<dbReference type="SMR" id="A6BLW4"/>
<dbReference type="FunCoup" id="A6BLW4">
    <property type="interactions" value="1288"/>
</dbReference>
<dbReference type="STRING" id="39947.A6BLW4"/>
<dbReference type="PaxDb" id="39947-A6BLW4"/>
<dbReference type="EnsemblPlants" id="Os03t0251350-01">
    <property type="protein sequence ID" value="Os03t0251350-01"/>
    <property type="gene ID" value="Os03g0251350"/>
</dbReference>
<dbReference type="Gramene" id="Os03t0251350-01">
    <property type="protein sequence ID" value="Os03t0251350-01"/>
    <property type="gene ID" value="Os03g0251350"/>
</dbReference>
<dbReference type="KEGG" id="dosa:Os03g0251350"/>
<dbReference type="eggNOG" id="KOG1657">
    <property type="taxonomic scope" value="Eukaryota"/>
</dbReference>
<dbReference type="HOGENOM" id="CLU_045277_0_1_1"/>
<dbReference type="InParanoid" id="A6BLW4"/>
<dbReference type="OMA" id="WQTSEEH"/>
<dbReference type="OrthoDB" id="1272441at2759"/>
<dbReference type="Proteomes" id="UP000000763">
    <property type="component" value="Chromosome 3"/>
</dbReference>
<dbReference type="Proteomes" id="UP000059680">
    <property type="component" value="Chromosome 3"/>
</dbReference>
<dbReference type="GO" id="GO:0005737">
    <property type="term" value="C:cytoplasm"/>
    <property type="evidence" value="ECO:0000314"/>
    <property type="project" value="UniProtKB"/>
</dbReference>
<dbReference type="GO" id="GO:0005634">
    <property type="term" value="C:nucleus"/>
    <property type="evidence" value="ECO:0000314"/>
    <property type="project" value="UniProtKB"/>
</dbReference>
<dbReference type="GO" id="GO:0003677">
    <property type="term" value="F:DNA binding"/>
    <property type="evidence" value="ECO:0007669"/>
    <property type="project" value="UniProtKB-KW"/>
</dbReference>
<dbReference type="GO" id="GO:0000981">
    <property type="term" value="F:DNA-binding transcription factor activity, RNA polymerase II-specific"/>
    <property type="evidence" value="ECO:0000318"/>
    <property type="project" value="GO_Central"/>
</dbReference>
<dbReference type="GO" id="GO:0046982">
    <property type="term" value="F:protein heterodimerization activity"/>
    <property type="evidence" value="ECO:0007669"/>
    <property type="project" value="InterPro"/>
</dbReference>
<dbReference type="GO" id="GO:0009908">
    <property type="term" value="P:flower development"/>
    <property type="evidence" value="ECO:0007669"/>
    <property type="project" value="UniProtKB-KW"/>
</dbReference>
<dbReference type="GO" id="GO:0048579">
    <property type="term" value="P:negative regulation of long-day photoperiodism, flowering"/>
    <property type="evidence" value="ECO:0000315"/>
    <property type="project" value="UniProtKB"/>
</dbReference>
<dbReference type="GO" id="GO:0006357">
    <property type="term" value="P:regulation of transcription by RNA polymerase II"/>
    <property type="evidence" value="ECO:0000318"/>
    <property type="project" value="GO_Central"/>
</dbReference>
<dbReference type="CDD" id="cd22908">
    <property type="entry name" value="HFD_NFYC-like"/>
    <property type="match status" value="1"/>
</dbReference>
<dbReference type="FunFam" id="1.10.20.10:FF:000006">
    <property type="entry name" value="Nuclear transcription factor Y subunit gamma"/>
    <property type="match status" value="1"/>
</dbReference>
<dbReference type="Gene3D" id="1.10.20.10">
    <property type="entry name" value="Histone, subunit A"/>
    <property type="match status" value="1"/>
</dbReference>
<dbReference type="InterPro" id="IPR009072">
    <property type="entry name" value="Histone-fold"/>
</dbReference>
<dbReference type="InterPro" id="IPR007125">
    <property type="entry name" value="Histone_H2A/H2B/H3"/>
</dbReference>
<dbReference type="InterPro" id="IPR050568">
    <property type="entry name" value="Transcr_DNA_Rep_Reg"/>
</dbReference>
<dbReference type="PANTHER" id="PTHR10252">
    <property type="entry name" value="HISTONE-LIKE TRANSCRIPTION FACTOR CCAAT-RELATED"/>
    <property type="match status" value="1"/>
</dbReference>
<dbReference type="PANTHER" id="PTHR10252:SF39">
    <property type="entry name" value="NUCLEAR TRANSCRIPTION FACTOR Y SUBUNIT C-6"/>
    <property type="match status" value="1"/>
</dbReference>
<dbReference type="Pfam" id="PF00125">
    <property type="entry name" value="Histone"/>
    <property type="match status" value="1"/>
</dbReference>
<dbReference type="SUPFAM" id="SSF47113">
    <property type="entry name" value="Histone-fold"/>
    <property type="match status" value="1"/>
</dbReference>
<reference key="1">
    <citation type="journal article" date="2008" name="Mol. Genet. Genomics">
        <title>Identification, characterization and interaction of HAP family genes in rice.</title>
        <authorList>
            <person name="Thirumurugan T."/>
            <person name="Ito Y."/>
            <person name="Kubo T."/>
            <person name="Serizawa A."/>
            <person name="Kurata N."/>
        </authorList>
    </citation>
    <scope>NUCLEOTIDE SEQUENCE [GENOMIC DNA]</scope>
    <source>
        <strain>cv. Nipponbare</strain>
    </source>
</reference>
<reference key="2">
    <citation type="journal article" date="2005" name="Genome Res.">
        <title>Sequence, annotation, and analysis of synteny between rice chromosome 3 and diverged grass species.</title>
        <authorList>
            <consortium name="The rice chromosome 3 sequencing consortium"/>
            <person name="Buell C.R."/>
            <person name="Yuan Q."/>
            <person name="Ouyang S."/>
            <person name="Liu J."/>
            <person name="Zhu W."/>
            <person name="Wang A."/>
            <person name="Maiti R."/>
            <person name="Haas B."/>
            <person name="Wortman J."/>
            <person name="Pertea M."/>
            <person name="Jones K.M."/>
            <person name="Kim M."/>
            <person name="Overton L."/>
            <person name="Tsitrin T."/>
            <person name="Fadrosh D."/>
            <person name="Bera J."/>
            <person name="Weaver B."/>
            <person name="Jin S."/>
            <person name="Johri S."/>
            <person name="Reardon M."/>
            <person name="Webb K."/>
            <person name="Hill J."/>
            <person name="Moffat K."/>
            <person name="Tallon L."/>
            <person name="Van Aken S."/>
            <person name="Lewis M."/>
            <person name="Utterback T."/>
            <person name="Feldblyum T."/>
            <person name="Zismann V."/>
            <person name="Iobst S."/>
            <person name="Hsiao J."/>
            <person name="de Vazeille A.R."/>
            <person name="Salzberg S.L."/>
            <person name="White O."/>
            <person name="Fraser C.M."/>
            <person name="Yu Y."/>
            <person name="Kim H."/>
            <person name="Rambo T."/>
            <person name="Currie J."/>
            <person name="Collura K."/>
            <person name="Kernodle-Thompson S."/>
            <person name="Wei F."/>
            <person name="Kudrna K."/>
            <person name="Ammiraju J.S.S."/>
            <person name="Luo M."/>
            <person name="Goicoechea J.L."/>
            <person name="Wing R.A."/>
            <person name="Henry D."/>
            <person name="Oates R."/>
            <person name="Palmer M."/>
            <person name="Pries G."/>
            <person name="Saski C."/>
            <person name="Simmons J."/>
            <person name="Soderlund C."/>
            <person name="Nelson W."/>
            <person name="de la Bastide M."/>
            <person name="Spiegel L."/>
            <person name="Nascimento L."/>
            <person name="Huang E."/>
            <person name="Preston R."/>
            <person name="Zutavern T."/>
            <person name="Palmer L."/>
            <person name="O'Shaughnessy A."/>
            <person name="Dike S."/>
            <person name="McCombie W.R."/>
            <person name="Minx P."/>
            <person name="Cordum H."/>
            <person name="Wilson R."/>
            <person name="Jin W."/>
            <person name="Lee H.R."/>
            <person name="Jiang J."/>
            <person name="Jackson S."/>
        </authorList>
    </citation>
    <scope>NUCLEOTIDE SEQUENCE [LARGE SCALE GENOMIC DNA]</scope>
    <source>
        <strain>cv. Nipponbare</strain>
    </source>
</reference>
<reference key="3">
    <citation type="journal article" date="2005" name="Nature">
        <title>The map-based sequence of the rice genome.</title>
        <authorList>
            <consortium name="International rice genome sequencing project (IRGSP)"/>
        </authorList>
    </citation>
    <scope>NUCLEOTIDE SEQUENCE [LARGE SCALE GENOMIC DNA]</scope>
    <source>
        <strain>cv. Nipponbare</strain>
    </source>
</reference>
<reference key="4">
    <citation type="journal article" date="2008" name="Nucleic Acids Res.">
        <title>The rice annotation project database (RAP-DB): 2008 update.</title>
        <authorList>
            <consortium name="The rice annotation project (RAP)"/>
        </authorList>
    </citation>
    <scope>GENOME REANNOTATION</scope>
    <source>
        <strain>cv. Nipponbare</strain>
    </source>
</reference>
<reference key="5">
    <citation type="journal article" date="2013" name="Rice">
        <title>Improvement of the Oryza sativa Nipponbare reference genome using next generation sequence and optical map data.</title>
        <authorList>
            <person name="Kawahara Y."/>
            <person name="de la Bastide M."/>
            <person name="Hamilton J.P."/>
            <person name="Kanamori H."/>
            <person name="McCombie W.R."/>
            <person name="Ouyang S."/>
            <person name="Schwartz D.C."/>
            <person name="Tanaka T."/>
            <person name="Wu J."/>
            <person name="Zhou S."/>
            <person name="Childs K.L."/>
            <person name="Davidson R.M."/>
            <person name="Lin H."/>
            <person name="Quesada-Ocampo L."/>
            <person name="Vaillancourt B."/>
            <person name="Sakai H."/>
            <person name="Lee S.S."/>
            <person name="Kim J."/>
            <person name="Numa H."/>
            <person name="Itoh T."/>
            <person name="Buell C.R."/>
            <person name="Matsumoto T."/>
        </authorList>
    </citation>
    <scope>GENOME REANNOTATION</scope>
    <source>
        <strain>cv. Nipponbare</strain>
    </source>
</reference>
<reference key="6">
    <citation type="journal article" date="2016" name="Planta">
        <title>OsNF-YC2 and OsNF-YC4 proteins inhibit flowering under long-day conditions in rice.</title>
        <authorList>
            <person name="Kim S.K."/>
            <person name="Park H.Y."/>
            <person name="Jang Y.H."/>
            <person name="Lee K.C."/>
            <person name="Chung Y.S."/>
            <person name="Lee J.H."/>
            <person name="Kim J.K."/>
        </authorList>
    </citation>
    <scope>FUNCTION</scope>
    <scope>INTERACTION WITH NFYB8; NFYB10 AND HD5/NFYB11</scope>
    <scope>SUBCELLULAR LOCATION</scope>
    <scope>INDUCTION</scope>
</reference>
<feature type="chain" id="PRO_0000437434" description="Nuclear transcription factor Y subunit C-2">
    <location>
        <begin position="1"/>
        <end position="246"/>
    </location>
</feature>
<feature type="region of interest" description="Disordered" evidence="2">
    <location>
        <begin position="1"/>
        <end position="35"/>
    </location>
</feature>
<feature type="region of interest" description="Disordered" evidence="2">
    <location>
        <begin position="205"/>
        <end position="246"/>
    </location>
</feature>
<feature type="compositionally biased region" description="Low complexity" evidence="2">
    <location>
        <begin position="9"/>
        <end position="21"/>
    </location>
</feature>
<feature type="helix" evidence="9">
    <location>
        <begin position="72"/>
        <end position="80"/>
    </location>
</feature>
<feature type="helix" evidence="9">
    <location>
        <begin position="91"/>
        <end position="117"/>
    </location>
</feature>
<feature type="strand" evidence="9">
    <location>
        <begin position="121"/>
        <end position="123"/>
    </location>
</feature>
<feature type="helix" evidence="9">
    <location>
        <begin position="125"/>
        <end position="133"/>
    </location>
</feature>
<feature type="helix" evidence="9">
    <location>
        <begin position="136"/>
        <end position="141"/>
    </location>
</feature>
<feature type="turn" evidence="9">
    <location>
        <begin position="142"/>
        <end position="144"/>
    </location>
</feature>
<accession>A6BLW4</accession>
<accession>Q10P13</accession>